<gene>
    <name type="primary">mat2b</name>
</gene>
<accession>Q4QQZ4</accession>
<feature type="chain" id="PRO_0000287525" description="Methionine adenosyltransferase 2 subunit beta">
    <location>
        <begin position="1"/>
        <end position="334"/>
    </location>
</feature>
<feature type="region of interest" description="Required for interaction with MAT2A" evidence="1">
    <location>
        <begin position="319"/>
        <end position="334"/>
    </location>
</feature>
<feature type="binding site" evidence="1">
    <location>
        <begin position="37"/>
        <end position="40"/>
    </location>
    <ligand>
        <name>NADP(+)</name>
        <dbReference type="ChEBI" id="CHEBI:58349"/>
    </ligand>
</feature>
<feature type="binding site" evidence="1">
    <location>
        <begin position="60"/>
        <end position="62"/>
    </location>
    <ligand>
        <name>NADP(+)</name>
        <dbReference type="ChEBI" id="CHEBI:58349"/>
    </ligand>
</feature>
<feature type="binding site" evidence="1">
    <location>
        <begin position="71"/>
        <end position="72"/>
    </location>
    <ligand>
        <name>NADP(+)</name>
        <dbReference type="ChEBI" id="CHEBI:58349"/>
    </ligand>
</feature>
<feature type="binding site" evidence="1">
    <location>
        <position position="93"/>
    </location>
    <ligand>
        <name>NADP(+)</name>
        <dbReference type="ChEBI" id="CHEBI:58349"/>
    </ligand>
</feature>
<feature type="binding site" evidence="1">
    <location>
        <position position="97"/>
    </location>
    <ligand>
        <name>NADP(+)</name>
        <dbReference type="ChEBI" id="CHEBI:58349"/>
    </ligand>
</feature>
<feature type="binding site" evidence="1">
    <location>
        <position position="159"/>
    </location>
    <ligand>
        <name>NADP(+)</name>
        <dbReference type="ChEBI" id="CHEBI:58349"/>
    </ligand>
</feature>
<proteinExistence type="evidence at transcript level"/>
<sequence length="334" mass="37641">MEGRYKDYRIRFSPGWVEVVQDDVTVPSRRALITGATGLLGRAVYKEFKENSWHVLGCGYSRARPRFECLNLLDEAAVKALIQDFKPHVIIHCAAERRPDIVESQPELASLLNVVASENLAKVAAGVGAFLIYVSSDYVFDGTSPPYREDSIPHPLNLYGKTKLDGERAVLQNNEGAAVLRVPVMYGDVEKLSESAVTILFDKVQFSNKSANLDHCQQRFPTHVKDVATVCLQLTERKIQDPSIKGIYHWSGNEQMTKYEIACAMADAFNLPSSHLRPITDEPVGATPRPWNPQLDCSKLEKMGIGQRTPFRVGIRETLWPFLVDKRWRQTVFH</sequence>
<name>MAT2B_XENLA</name>
<evidence type="ECO:0000250" key="1">
    <source>
        <dbReference type="UniProtKB" id="Q9NZL9"/>
    </source>
</evidence>
<evidence type="ECO:0000305" key="2"/>
<reference key="1">
    <citation type="submission" date="2005-06" db="EMBL/GenBank/DDBJ databases">
        <authorList>
            <consortium name="NIH - Xenopus Gene Collection (XGC) project"/>
        </authorList>
    </citation>
    <scope>NUCLEOTIDE SEQUENCE [LARGE SCALE MRNA]</scope>
    <source>
        <tissue>Egg</tissue>
    </source>
</reference>
<comment type="function">
    <text evidence="1">Regulatory subunit of S-adenosylmethionine synthetase 2, an enzyme that catalyzes the formation of S-adenosylmethionine from methionine and ATP. Regulates MAT2A catalytic activity by changing its kinetic properties, increasing its affinity for L-methionine. Can bind NADP (in vitro).</text>
</comment>
<comment type="pathway">
    <text evidence="1">Amino-acid biosynthesis; S-adenosyl-L-methionine biosynthesis; S-adenosyl-L-methionine from L-methionine: step 1/1.</text>
</comment>
<comment type="subunit">
    <text evidence="1">Heterotrimer; composed of a catalytic mat2a homodimer that binds one regulatory mat2b chain. Heterohexamer; composed of a central, catalytic mat2a homotetramer flanked on either side by a regulatory mat2b chain. NADP binding increases the affinity for mat2a.</text>
</comment>
<comment type="similarity">
    <text evidence="2">Belongs to the dTDP-4-dehydrorhamnose reductase family. MAT2B subfamily.</text>
</comment>
<protein>
    <recommendedName>
        <fullName>Methionine adenosyltransferase 2 subunit beta</fullName>
    </recommendedName>
    <alternativeName>
        <fullName>Methionine adenosyltransferase II beta</fullName>
        <shortName>MAT II beta</shortName>
    </alternativeName>
</protein>
<dbReference type="EMBL" id="BC097788">
    <property type="protein sequence ID" value="AAH97788.1"/>
    <property type="molecule type" value="mRNA"/>
</dbReference>
<dbReference type="RefSeq" id="NP_001089523.1">
    <property type="nucleotide sequence ID" value="NM_001096054.1"/>
</dbReference>
<dbReference type="SMR" id="Q4QQZ4"/>
<dbReference type="DNASU" id="734577"/>
<dbReference type="GeneID" id="734577"/>
<dbReference type="KEGG" id="xla:734577"/>
<dbReference type="AGR" id="Xenbase:XB-GENE-972027"/>
<dbReference type="CTD" id="734577"/>
<dbReference type="Xenbase" id="XB-GENE-972027">
    <property type="gene designation" value="mat2b.L"/>
</dbReference>
<dbReference type="OrthoDB" id="6235964at2759"/>
<dbReference type="UniPathway" id="UPA00315">
    <property type="reaction ID" value="UER00080"/>
</dbReference>
<dbReference type="Proteomes" id="UP000186698">
    <property type="component" value="Chromosome 3L"/>
</dbReference>
<dbReference type="Bgee" id="734577">
    <property type="expression patterns" value="Expressed in testis and 19 other cell types or tissues"/>
</dbReference>
<dbReference type="GO" id="GO:0048269">
    <property type="term" value="C:methionine adenosyltransferase complex"/>
    <property type="evidence" value="ECO:0000250"/>
    <property type="project" value="UniProtKB"/>
</dbReference>
<dbReference type="GO" id="GO:0048270">
    <property type="term" value="F:methionine adenosyltransferase regulator activity"/>
    <property type="evidence" value="ECO:0000250"/>
    <property type="project" value="UniProtKB"/>
</dbReference>
<dbReference type="GO" id="GO:0006730">
    <property type="term" value="P:one-carbon metabolic process"/>
    <property type="evidence" value="ECO:0007669"/>
    <property type="project" value="UniProtKB-KW"/>
</dbReference>
<dbReference type="GO" id="GO:0006556">
    <property type="term" value="P:S-adenosylmethionine biosynthetic process"/>
    <property type="evidence" value="ECO:0000250"/>
    <property type="project" value="UniProtKB"/>
</dbReference>
<dbReference type="CDD" id="cd05254">
    <property type="entry name" value="dTDP_HR_like_SDR_e"/>
    <property type="match status" value="1"/>
</dbReference>
<dbReference type="FunFam" id="3.40.50.720:FF:000133">
    <property type="entry name" value="Methionine adenosyltransferase 2 subunit beta"/>
    <property type="match status" value="1"/>
</dbReference>
<dbReference type="Gene3D" id="3.40.50.720">
    <property type="entry name" value="NAD(P)-binding Rossmann-like Domain"/>
    <property type="match status" value="1"/>
</dbReference>
<dbReference type="InterPro" id="IPR005913">
    <property type="entry name" value="dTDP_dehydrorham_reduct"/>
</dbReference>
<dbReference type="InterPro" id="IPR036291">
    <property type="entry name" value="NAD(P)-bd_dom_sf"/>
</dbReference>
<dbReference type="InterPro" id="IPR029903">
    <property type="entry name" value="RmlD-like-bd"/>
</dbReference>
<dbReference type="PANTHER" id="PTHR10491">
    <property type="entry name" value="DTDP-4-DEHYDRORHAMNOSE REDUCTASE"/>
    <property type="match status" value="1"/>
</dbReference>
<dbReference type="PANTHER" id="PTHR10491:SF4">
    <property type="entry name" value="METHIONINE ADENOSYLTRANSFERASE 2 SUBUNIT BETA"/>
    <property type="match status" value="1"/>
</dbReference>
<dbReference type="Pfam" id="PF04321">
    <property type="entry name" value="RmlD_sub_bind"/>
    <property type="match status" value="1"/>
</dbReference>
<dbReference type="SUPFAM" id="SSF51735">
    <property type="entry name" value="NAD(P)-binding Rossmann-fold domains"/>
    <property type="match status" value="1"/>
</dbReference>
<organism>
    <name type="scientific">Xenopus laevis</name>
    <name type="common">African clawed frog</name>
    <dbReference type="NCBI Taxonomy" id="8355"/>
    <lineage>
        <taxon>Eukaryota</taxon>
        <taxon>Metazoa</taxon>
        <taxon>Chordata</taxon>
        <taxon>Craniata</taxon>
        <taxon>Vertebrata</taxon>
        <taxon>Euteleostomi</taxon>
        <taxon>Amphibia</taxon>
        <taxon>Batrachia</taxon>
        <taxon>Anura</taxon>
        <taxon>Pipoidea</taxon>
        <taxon>Pipidae</taxon>
        <taxon>Xenopodinae</taxon>
        <taxon>Xenopus</taxon>
        <taxon>Xenopus</taxon>
    </lineage>
</organism>
<keyword id="KW-0521">NADP</keyword>
<keyword id="KW-0554">One-carbon metabolism</keyword>
<keyword id="KW-1185">Reference proteome</keyword>